<comment type="catalytic activity">
    <reaction evidence="1">
        <text>GTP + H2O = 7,8-dihydroneopterin 3'-triphosphate + formate + H(+)</text>
        <dbReference type="Rhea" id="RHEA:17473"/>
        <dbReference type="ChEBI" id="CHEBI:15377"/>
        <dbReference type="ChEBI" id="CHEBI:15378"/>
        <dbReference type="ChEBI" id="CHEBI:15740"/>
        <dbReference type="ChEBI" id="CHEBI:37565"/>
        <dbReference type="ChEBI" id="CHEBI:58462"/>
        <dbReference type="EC" id="3.5.4.16"/>
    </reaction>
</comment>
<comment type="pathway">
    <text evidence="1">Cofactor biosynthesis; 7,8-dihydroneopterin triphosphate biosynthesis; 7,8-dihydroneopterin triphosphate from GTP: step 1/1.</text>
</comment>
<comment type="subunit">
    <text evidence="1">Homomer.</text>
</comment>
<comment type="similarity">
    <text evidence="1">Belongs to the GTP cyclohydrolase I family.</text>
</comment>
<keyword id="KW-0342">GTP-binding</keyword>
<keyword id="KW-0378">Hydrolase</keyword>
<keyword id="KW-0479">Metal-binding</keyword>
<keyword id="KW-0547">Nucleotide-binding</keyword>
<keyword id="KW-0554">One-carbon metabolism</keyword>
<keyword id="KW-0862">Zinc</keyword>
<accession>C3MXF1</accession>
<reference key="1">
    <citation type="journal article" date="2009" name="Proc. Natl. Acad. Sci. U.S.A.">
        <title>Biogeography of the Sulfolobus islandicus pan-genome.</title>
        <authorList>
            <person name="Reno M.L."/>
            <person name="Held N.L."/>
            <person name="Fields C.J."/>
            <person name="Burke P.V."/>
            <person name="Whitaker R.J."/>
        </authorList>
    </citation>
    <scope>NUCLEOTIDE SEQUENCE [LARGE SCALE GENOMIC DNA]</scope>
    <source>
        <strain>M.14.25 / Kamchatka #1</strain>
    </source>
</reference>
<evidence type="ECO:0000255" key="1">
    <source>
        <dbReference type="HAMAP-Rule" id="MF_00223"/>
    </source>
</evidence>
<name>GCH1_SACI4</name>
<feature type="chain" id="PRO_1000204297" description="GTP cyclohydrolase 1">
    <location>
        <begin position="1"/>
        <end position="208"/>
    </location>
</feature>
<feature type="binding site" evidence="1">
    <location>
        <position position="89"/>
    </location>
    <ligand>
        <name>Zn(2+)</name>
        <dbReference type="ChEBI" id="CHEBI:29105"/>
    </ligand>
</feature>
<feature type="binding site" evidence="1">
    <location>
        <position position="92"/>
    </location>
    <ligand>
        <name>Zn(2+)</name>
        <dbReference type="ChEBI" id="CHEBI:29105"/>
    </ligand>
</feature>
<feature type="binding site" evidence="1">
    <location>
        <position position="163"/>
    </location>
    <ligand>
        <name>Zn(2+)</name>
        <dbReference type="ChEBI" id="CHEBI:29105"/>
    </ligand>
</feature>
<gene>
    <name evidence="1" type="primary">folE</name>
    <name type="ordered locus">M1425_1739</name>
</gene>
<proteinExistence type="inferred from homology"/>
<sequence length="208" mass="23566">MQKTELDDQKLVEEIARRIREILELLGENPEREGLKETPERVAKALLEMTSGLRTPPPQIKVFSLGEDGEVYEKNQIVLIKDVNFSSLCEHHMLPIIGKIHVAYIVSNSGKVAGFSKIIRIVNYYSSRLQIQERLVEQIADAIMNSEIKPKGVMVIGNAIHMCSYVRGVKDKEAKLVSVAYRGLFKTNRALQNHVFRLLDNANKVNLL</sequence>
<dbReference type="EC" id="3.5.4.16" evidence="1"/>
<dbReference type="EMBL" id="CP001400">
    <property type="protein sequence ID" value="ACP38485.1"/>
    <property type="molecule type" value="Genomic_DNA"/>
</dbReference>
<dbReference type="RefSeq" id="WP_012711716.1">
    <property type="nucleotide sequence ID" value="NC_012588.1"/>
</dbReference>
<dbReference type="SMR" id="C3MXF1"/>
<dbReference type="GeneID" id="84062091"/>
<dbReference type="KEGG" id="sia:M1425_1739"/>
<dbReference type="HOGENOM" id="CLU_049768_3_2_2"/>
<dbReference type="UniPathway" id="UPA00848">
    <property type="reaction ID" value="UER00151"/>
</dbReference>
<dbReference type="Proteomes" id="UP000001350">
    <property type="component" value="Chromosome"/>
</dbReference>
<dbReference type="GO" id="GO:0005737">
    <property type="term" value="C:cytoplasm"/>
    <property type="evidence" value="ECO:0007669"/>
    <property type="project" value="TreeGrafter"/>
</dbReference>
<dbReference type="GO" id="GO:0005525">
    <property type="term" value="F:GTP binding"/>
    <property type="evidence" value="ECO:0007669"/>
    <property type="project" value="UniProtKB-KW"/>
</dbReference>
<dbReference type="GO" id="GO:0003934">
    <property type="term" value="F:GTP cyclohydrolase I activity"/>
    <property type="evidence" value="ECO:0007669"/>
    <property type="project" value="UniProtKB-UniRule"/>
</dbReference>
<dbReference type="GO" id="GO:0008270">
    <property type="term" value="F:zinc ion binding"/>
    <property type="evidence" value="ECO:0007669"/>
    <property type="project" value="UniProtKB-UniRule"/>
</dbReference>
<dbReference type="GO" id="GO:0006730">
    <property type="term" value="P:one-carbon metabolic process"/>
    <property type="evidence" value="ECO:0007669"/>
    <property type="project" value="UniProtKB-UniRule"/>
</dbReference>
<dbReference type="GO" id="GO:0006729">
    <property type="term" value="P:tetrahydrobiopterin biosynthetic process"/>
    <property type="evidence" value="ECO:0007669"/>
    <property type="project" value="TreeGrafter"/>
</dbReference>
<dbReference type="GO" id="GO:0046654">
    <property type="term" value="P:tetrahydrofolate biosynthetic process"/>
    <property type="evidence" value="ECO:0007669"/>
    <property type="project" value="UniProtKB-UniRule"/>
</dbReference>
<dbReference type="FunFam" id="1.10.286.10:FF:000007">
    <property type="entry name" value="GTP cyclohydrolase 1"/>
    <property type="match status" value="1"/>
</dbReference>
<dbReference type="FunFam" id="3.30.1130.10:FF:000001">
    <property type="entry name" value="GTP cyclohydrolase 1"/>
    <property type="match status" value="1"/>
</dbReference>
<dbReference type="Gene3D" id="1.10.286.10">
    <property type="match status" value="1"/>
</dbReference>
<dbReference type="Gene3D" id="3.30.1130.10">
    <property type="match status" value="1"/>
</dbReference>
<dbReference type="HAMAP" id="MF_00223">
    <property type="entry name" value="FolE"/>
    <property type="match status" value="1"/>
</dbReference>
<dbReference type="InterPro" id="IPR043133">
    <property type="entry name" value="GTP-CH-I_C/QueF"/>
</dbReference>
<dbReference type="InterPro" id="IPR043134">
    <property type="entry name" value="GTP-CH-I_N"/>
</dbReference>
<dbReference type="InterPro" id="IPR001474">
    <property type="entry name" value="GTP_CycHdrlase_I"/>
</dbReference>
<dbReference type="InterPro" id="IPR018234">
    <property type="entry name" value="GTP_CycHdrlase_I_CS"/>
</dbReference>
<dbReference type="InterPro" id="IPR020602">
    <property type="entry name" value="GTP_CycHdrlase_I_dom"/>
</dbReference>
<dbReference type="NCBIfam" id="NF006825">
    <property type="entry name" value="PRK09347.1-2"/>
    <property type="match status" value="1"/>
</dbReference>
<dbReference type="NCBIfam" id="NF006826">
    <property type="entry name" value="PRK09347.1-3"/>
    <property type="match status" value="1"/>
</dbReference>
<dbReference type="PANTHER" id="PTHR11109:SF7">
    <property type="entry name" value="GTP CYCLOHYDROLASE 1"/>
    <property type="match status" value="1"/>
</dbReference>
<dbReference type="PANTHER" id="PTHR11109">
    <property type="entry name" value="GTP CYCLOHYDROLASE I"/>
    <property type="match status" value="1"/>
</dbReference>
<dbReference type="Pfam" id="PF01227">
    <property type="entry name" value="GTP_cyclohydroI"/>
    <property type="match status" value="1"/>
</dbReference>
<dbReference type="SUPFAM" id="SSF55620">
    <property type="entry name" value="Tetrahydrobiopterin biosynthesis enzymes-like"/>
    <property type="match status" value="1"/>
</dbReference>
<dbReference type="PROSITE" id="PS00859">
    <property type="entry name" value="GTP_CYCLOHYDROL_1_1"/>
    <property type="match status" value="1"/>
</dbReference>
<dbReference type="PROSITE" id="PS00860">
    <property type="entry name" value="GTP_CYCLOHYDROL_1_2"/>
    <property type="match status" value="1"/>
</dbReference>
<organism>
    <name type="scientific">Saccharolobus islandicus (strain M.14.25 / Kamchatka #1)</name>
    <name type="common">Sulfolobus islandicus</name>
    <dbReference type="NCBI Taxonomy" id="427317"/>
    <lineage>
        <taxon>Archaea</taxon>
        <taxon>Thermoproteota</taxon>
        <taxon>Thermoprotei</taxon>
        <taxon>Sulfolobales</taxon>
        <taxon>Sulfolobaceae</taxon>
        <taxon>Saccharolobus</taxon>
    </lineage>
</organism>
<protein>
    <recommendedName>
        <fullName evidence="1">GTP cyclohydrolase 1</fullName>
        <ecNumber evidence="1">3.5.4.16</ecNumber>
    </recommendedName>
    <alternativeName>
        <fullName evidence="1">GTP cyclohydrolase I</fullName>
        <shortName evidence="1">GTP-CH-I</shortName>
    </alternativeName>
</protein>